<name>C76H2_SALFT</name>
<gene>
    <name evidence="7" type="primary">CYP76AH24</name>
    <name evidence="6" type="synonym">FS</name>
    <name evidence="7" type="synonym">HFS</name>
</gene>
<evidence type="ECO:0000250" key="1">
    <source>
        <dbReference type="UniProtKB" id="A0A0S1TP26"/>
    </source>
</evidence>
<evidence type="ECO:0000250" key="2">
    <source>
        <dbReference type="UniProtKB" id="Q94IP1"/>
    </source>
</evidence>
<evidence type="ECO:0000255" key="3"/>
<evidence type="ECO:0000269" key="4">
    <source>
    </source>
</evidence>
<evidence type="ECO:0000269" key="5">
    <source>
    </source>
</evidence>
<evidence type="ECO:0000303" key="6">
    <source>
    </source>
</evidence>
<evidence type="ECO:0000303" key="7">
    <source>
    </source>
</evidence>
<evidence type="ECO:0000305" key="8"/>
<evidence type="ECO:0000305" key="9">
    <source>
    </source>
</evidence>
<accession>A0A0C5QRZ2</accession>
<reference key="1">
    <citation type="journal article" date="2015" name="PLoS ONE">
        <title>Towards elucidating carnosic acid biosynthesis in Lamiaceae: Functional characterization of the three first steps of the pathway in Salvia fruticosa and Rosmarinus officinalis.</title>
        <authorList>
            <person name="Bozic D."/>
            <person name="Papaefthimiou D."/>
            <person name="Brueckner K."/>
            <person name="de Vos R.C."/>
            <person name="Tsoleridis C.A."/>
            <person name="Katsarou D."/>
            <person name="Papanikolaou A."/>
            <person name="Pateraki I."/>
            <person name="Chatzopoulou F.M."/>
            <person name="Dimitriadou E."/>
            <person name="Kostas S."/>
            <person name="Manzano D."/>
            <person name="Scheler U."/>
            <person name="Ferrer A."/>
            <person name="Tissier A."/>
            <person name="Makris A.M."/>
            <person name="Kampranis S.C."/>
            <person name="Kanellis A.K."/>
        </authorList>
    </citation>
    <scope>NUCLEOTIDE SEQUENCE [MRNA]</scope>
    <scope>FUNCTION</scope>
    <scope>CATALYTIC ACTIVITY</scope>
    <scope>TISSUE SPECIFICITY</scope>
    <source>
        <tissue>Trichome gland</tissue>
    </source>
</reference>
<reference key="2">
    <citation type="journal article" date="2016" name="Nat. Commun.">
        <title>Elucidation of the biosynthesis of carnosic acid and its reconstitution in yeast.</title>
        <authorList>
            <person name="Scheler U."/>
            <person name="Brandt W."/>
            <person name="Porzel A."/>
            <person name="Rothe K."/>
            <person name="Manzano D."/>
            <person name="Bozic D."/>
            <person name="Papaefthimiou D."/>
            <person name="Balcke G.U."/>
            <person name="Henning A."/>
            <person name="Lohse S."/>
            <person name="Marillonnet S."/>
            <person name="Kanellis A.K."/>
            <person name="Ferrer A."/>
            <person name="Tissier A."/>
        </authorList>
    </citation>
    <scope>FUNCTION</scope>
    <scope>CATALYTIC ACTIVITY</scope>
</reference>
<reference key="3">
    <citation type="journal article" date="2019" name="Nat. Prod. Rep.">
        <title>Non-volatile natural products in plant glandular trichomes: chemistry, biological activities and biosynthesis.</title>
        <authorList>
            <person name="Liu Y."/>
            <person name="Jing S.-X."/>
            <person name="Luo S.-H."/>
            <person name="Li S.-H."/>
        </authorList>
    </citation>
    <scope>PATHWAY</scope>
    <scope>REVIEW</scope>
</reference>
<dbReference type="EC" id="1.14.14.175" evidence="4 5"/>
<dbReference type="EC" id="1.14.14.-" evidence="1"/>
<dbReference type="EC" id="1.14.14.60" evidence="5"/>
<dbReference type="EMBL" id="KP091842">
    <property type="protein sequence ID" value="AJQ30186.1"/>
    <property type="molecule type" value="mRNA"/>
</dbReference>
<dbReference type="SMR" id="A0A0C5QRZ2"/>
<dbReference type="KEGG" id="ag:AJQ30186"/>
<dbReference type="BioCyc" id="MetaCyc:MONOMER-19365"/>
<dbReference type="BRENDA" id="1.14.14.175">
    <property type="organism ID" value="12982"/>
</dbReference>
<dbReference type="UniPathway" id="UPA00213"/>
<dbReference type="GO" id="GO:0016020">
    <property type="term" value="C:membrane"/>
    <property type="evidence" value="ECO:0007669"/>
    <property type="project" value="UniProtKB-SubCell"/>
</dbReference>
<dbReference type="GO" id="GO:0020037">
    <property type="term" value="F:heme binding"/>
    <property type="evidence" value="ECO:0007669"/>
    <property type="project" value="InterPro"/>
</dbReference>
<dbReference type="GO" id="GO:0005506">
    <property type="term" value="F:iron ion binding"/>
    <property type="evidence" value="ECO:0007669"/>
    <property type="project" value="InterPro"/>
</dbReference>
<dbReference type="GO" id="GO:0016712">
    <property type="term" value="F:oxidoreductase activity, acting on paired donors, with incorporation or reduction of molecular oxygen, reduced flavin or flavoprotein as one donor, and incorporation of one atom of oxygen"/>
    <property type="evidence" value="ECO:0000314"/>
    <property type="project" value="UniProtKB"/>
</dbReference>
<dbReference type="GO" id="GO:0016102">
    <property type="term" value="P:diterpenoid biosynthetic process"/>
    <property type="evidence" value="ECO:0000314"/>
    <property type="project" value="UniProtKB"/>
</dbReference>
<dbReference type="CDD" id="cd11073">
    <property type="entry name" value="CYP76-like"/>
    <property type="match status" value="1"/>
</dbReference>
<dbReference type="FunFam" id="1.10.630.10:FF:000007">
    <property type="entry name" value="Cytochrome P450 76C4"/>
    <property type="match status" value="1"/>
</dbReference>
<dbReference type="Gene3D" id="1.10.630.10">
    <property type="entry name" value="Cytochrome P450"/>
    <property type="match status" value="1"/>
</dbReference>
<dbReference type="InterPro" id="IPR001128">
    <property type="entry name" value="Cyt_P450"/>
</dbReference>
<dbReference type="InterPro" id="IPR017972">
    <property type="entry name" value="Cyt_P450_CS"/>
</dbReference>
<dbReference type="InterPro" id="IPR002401">
    <property type="entry name" value="Cyt_P450_E_grp-I"/>
</dbReference>
<dbReference type="InterPro" id="IPR036396">
    <property type="entry name" value="Cyt_P450_sf"/>
</dbReference>
<dbReference type="PANTHER" id="PTHR47950">
    <property type="entry name" value="CYTOCHROME P450, FAMILY 76, SUBFAMILY C, POLYPEPTIDE 5-RELATED"/>
    <property type="match status" value="1"/>
</dbReference>
<dbReference type="PANTHER" id="PTHR47950:SF4">
    <property type="entry name" value="GERANIOL 8-HYDROXYLASE-LIKE"/>
    <property type="match status" value="1"/>
</dbReference>
<dbReference type="Pfam" id="PF00067">
    <property type="entry name" value="p450"/>
    <property type="match status" value="1"/>
</dbReference>
<dbReference type="PRINTS" id="PR00463">
    <property type="entry name" value="EP450I"/>
</dbReference>
<dbReference type="PRINTS" id="PR00385">
    <property type="entry name" value="P450"/>
</dbReference>
<dbReference type="SUPFAM" id="SSF48264">
    <property type="entry name" value="Cytochrome P450"/>
    <property type="match status" value="1"/>
</dbReference>
<dbReference type="PROSITE" id="PS00086">
    <property type="entry name" value="CYTOCHROME_P450"/>
    <property type="match status" value="1"/>
</dbReference>
<feature type="chain" id="PRO_0000452579" description="Ferruginol synthase">
    <location>
        <begin position="1"/>
        <end position="492"/>
    </location>
</feature>
<feature type="transmembrane region" description="Helical" evidence="3">
    <location>
        <begin position="1"/>
        <end position="21"/>
    </location>
</feature>
<feature type="binding site" description="axial binding residue" evidence="2">
    <location>
        <position position="436"/>
    </location>
    <ligand>
        <name>heme</name>
        <dbReference type="ChEBI" id="CHEBI:30413"/>
    </ligand>
    <ligandPart>
        <name>Fe</name>
        <dbReference type="ChEBI" id="CHEBI:18248"/>
    </ligandPart>
</feature>
<comment type="function">
    <text evidence="1 4 5">Monooxygenase involved in the biosynthesis of labdane-related diterpenes natural products (PubMed:26020634, PubMed:27703160). Catalyzes the oxidation of abietatriene to produce ferruginol (PubMed:26020634, PubMed:27703160). Catalyzes the oxidation of ferruginol at C-12 to produce 11-hydroxyferruginol (PubMed:27703160). Ferruginol and 11-hydroxyferruginol are intermediates in the biosynthesis of carnosate, a potent antioxidant (PubMed:26020634, PubMed:27703160). May also convert miltiradiene into 11-oxomiltiradiene (By similarity).</text>
</comment>
<comment type="catalytic activity">
    <reaction evidence="4 5">
        <text>abieta-8,11,13-triene + reduced [NADPH--hemoprotein reductase] + O2 = ferruginol + oxidized [NADPH--hemoprotein reductase] + H2O + H(+)</text>
        <dbReference type="Rhea" id="RHEA:48080"/>
        <dbReference type="Rhea" id="RHEA-COMP:11964"/>
        <dbReference type="Rhea" id="RHEA-COMP:11965"/>
        <dbReference type="ChEBI" id="CHEBI:15377"/>
        <dbReference type="ChEBI" id="CHEBI:15378"/>
        <dbReference type="ChEBI" id="CHEBI:15379"/>
        <dbReference type="ChEBI" id="CHEBI:57618"/>
        <dbReference type="ChEBI" id="CHEBI:58210"/>
        <dbReference type="ChEBI" id="CHEBI:78274"/>
        <dbReference type="ChEBI" id="CHEBI:86062"/>
        <dbReference type="EC" id="1.14.14.175"/>
    </reaction>
    <physiologicalReaction direction="left-to-right" evidence="4 5">
        <dbReference type="Rhea" id="RHEA:48081"/>
    </physiologicalReaction>
</comment>
<comment type="catalytic activity">
    <reaction evidence="5">
        <text>ferruginol + reduced [NADPH--hemoprotein reductase] + O2 = 11-hydroxyferruginol + oxidized [NADPH--hemoprotein reductase] + H2O + H(+)</text>
        <dbReference type="Rhea" id="RHEA:55428"/>
        <dbReference type="Rhea" id="RHEA-COMP:11964"/>
        <dbReference type="Rhea" id="RHEA-COMP:11965"/>
        <dbReference type="ChEBI" id="CHEBI:15377"/>
        <dbReference type="ChEBI" id="CHEBI:15378"/>
        <dbReference type="ChEBI" id="CHEBI:15379"/>
        <dbReference type="ChEBI" id="CHEBI:57618"/>
        <dbReference type="ChEBI" id="CHEBI:58210"/>
        <dbReference type="ChEBI" id="CHEBI:78274"/>
        <dbReference type="ChEBI" id="CHEBI:138942"/>
        <dbReference type="EC" id="1.14.14.60"/>
    </reaction>
    <physiologicalReaction direction="left-to-right" evidence="5">
        <dbReference type="Rhea" id="RHEA:55429"/>
    </physiologicalReaction>
</comment>
<comment type="catalytic activity">
    <reaction evidence="1">
        <text>miltiradiene + 2 reduced [NADPH--hemoprotein reductase] + 2 O2 = 11-oxomiltiradiene + 2 oxidized [NADPH--hemoprotein reductase] + 3 H2O + 2 H(+)</text>
        <dbReference type="Rhea" id="RHEA:66796"/>
        <dbReference type="Rhea" id="RHEA-COMP:11964"/>
        <dbReference type="Rhea" id="RHEA-COMP:11965"/>
        <dbReference type="ChEBI" id="CHEBI:15377"/>
        <dbReference type="ChEBI" id="CHEBI:15378"/>
        <dbReference type="ChEBI" id="CHEBI:15379"/>
        <dbReference type="ChEBI" id="CHEBI:57618"/>
        <dbReference type="ChEBI" id="CHEBI:58210"/>
        <dbReference type="ChEBI" id="CHEBI:65037"/>
        <dbReference type="ChEBI" id="CHEBI:167496"/>
    </reaction>
    <physiologicalReaction direction="left-to-right" evidence="1">
        <dbReference type="Rhea" id="RHEA:66797"/>
    </physiologicalReaction>
</comment>
<comment type="cofactor">
    <cofactor evidence="2">
        <name>heme</name>
        <dbReference type="ChEBI" id="CHEBI:30413"/>
    </cofactor>
</comment>
<comment type="pathway">
    <text evidence="9">Secondary metabolite biosynthesis; terpenoid biosynthesis.</text>
</comment>
<comment type="subcellular location">
    <subcellularLocation>
        <location evidence="3">Membrane</location>
        <topology evidence="3">Single-pass membrane protein</topology>
    </subcellularLocation>
</comment>
<comment type="tissue specificity">
    <text evidence="4">Expressed in leaf glandular trichomes.</text>
</comment>
<comment type="similarity">
    <text evidence="8">Belongs to the cytochrome P450 family.</text>
</comment>
<protein>
    <recommendedName>
        <fullName evidence="6">Ferruginol synthase</fullName>
        <shortName evidence="6">SfFS</shortName>
        <ecNumber evidence="4 5">1.14.14.175</ecNumber>
    </recommendedName>
    <alternativeName>
        <fullName evidence="8">11-oxomiltiradiene synthase</fullName>
        <ecNumber evidence="1">1.14.14.-</ecNumber>
    </alternativeName>
    <alternativeName>
        <fullName evidence="7">Cytochrome P450 76AH24</fullName>
    </alternativeName>
    <alternativeName>
        <fullName evidence="8">Ferruginol monooxygenase</fullName>
        <shortName evidence="7">11-hydroxyferruginol synthase</shortName>
        <ecNumber evidence="5">1.14.14.60</ecNumber>
    </alternativeName>
    <alternativeName>
        <fullName evidence="8">Miltiradiene oxidase</fullName>
    </alternativeName>
</protein>
<organism>
    <name type="scientific">Salvia fruticosa</name>
    <name type="common">Greek sage</name>
    <dbReference type="NCBI Taxonomy" id="268906"/>
    <lineage>
        <taxon>Eukaryota</taxon>
        <taxon>Viridiplantae</taxon>
        <taxon>Streptophyta</taxon>
        <taxon>Embryophyta</taxon>
        <taxon>Tracheophyta</taxon>
        <taxon>Spermatophyta</taxon>
        <taxon>Magnoliopsida</taxon>
        <taxon>eudicotyledons</taxon>
        <taxon>Gunneridae</taxon>
        <taxon>Pentapetalae</taxon>
        <taxon>asterids</taxon>
        <taxon>lamiids</taxon>
        <taxon>Lamiales</taxon>
        <taxon>Lamiaceae</taxon>
        <taxon>Nepetoideae</taxon>
        <taxon>Mentheae</taxon>
        <taxon>Salviinae</taxon>
        <taxon>Salvia</taxon>
        <taxon>Salvia incertae sedis</taxon>
    </lineage>
</organism>
<sequence length="492" mass="55616">MDPFPLVAAALFIAATWFITFKRRRNLPPGPFPYPIVGNMLQLGSQPHETFAKLSKKYGPLMSIHLGSLYTVIISSPEMAKEIMHKYGQVFSGRTIAQAVHACDHDKISMGFLPVGAEWRDMRKICKEQMFSHQSMEDSQNLRKQKLQQLLEYAQKCSEEGRGIDIREAAFITTLNLMSATLFSMQATEFDSKVTMEFKEIIEGVASIVGVPNFADYFPILRPFDPQGVKRRADVYFGRLLGLIEGYLNERIEFRKANPNAPKKDDFLETLVDALDAKDYKLKTEHLTHLMLDLFVGGSETSTTEIEWIMWELLASPEKMAKVKAELKSVMGGEKVVDESMMPRLPYLQAVVKESMRLHPPGPLLLPRKAESDQVVNGYLIPKGAQVLINAWAMGRDPSLWKNPDSFEPERFLDQKIDFKGTDYELIPFGSGRRVCPGMPLANRILHTVTATLVHNFDWKLERPEASDAHKGVLFGFAVRRAVPLKIVPIKA</sequence>
<keyword id="KW-0349">Heme</keyword>
<keyword id="KW-0408">Iron</keyword>
<keyword id="KW-0472">Membrane</keyword>
<keyword id="KW-0479">Metal-binding</keyword>
<keyword id="KW-0503">Monooxygenase</keyword>
<keyword id="KW-0560">Oxidoreductase</keyword>
<keyword id="KW-0812">Transmembrane</keyword>
<keyword id="KW-1133">Transmembrane helix</keyword>
<proteinExistence type="evidence at protein level"/>